<proteinExistence type="inferred from homology"/>
<organism>
    <name type="scientific">Pseudomonas putida (strain ATCC 700007 / DSM 6899 / JCM 31910 / BCRC 17059 / LMG 24140 / F1)</name>
    <dbReference type="NCBI Taxonomy" id="351746"/>
    <lineage>
        <taxon>Bacteria</taxon>
        <taxon>Pseudomonadati</taxon>
        <taxon>Pseudomonadota</taxon>
        <taxon>Gammaproteobacteria</taxon>
        <taxon>Pseudomonadales</taxon>
        <taxon>Pseudomonadaceae</taxon>
        <taxon>Pseudomonas</taxon>
    </lineage>
</organism>
<feature type="chain" id="PRO_1000058475" description="Inner membrane-spanning protein YciB">
    <location>
        <begin position="1"/>
        <end position="197"/>
    </location>
</feature>
<feature type="transmembrane region" description="Helical" evidence="1">
    <location>
        <begin position="36"/>
        <end position="56"/>
    </location>
</feature>
<feature type="transmembrane region" description="Helical" evidence="1">
    <location>
        <begin position="64"/>
        <end position="84"/>
    </location>
</feature>
<feature type="transmembrane region" description="Helical" evidence="1">
    <location>
        <begin position="90"/>
        <end position="110"/>
    </location>
</feature>
<feature type="transmembrane region" description="Helical" evidence="1">
    <location>
        <begin position="135"/>
        <end position="155"/>
    </location>
</feature>
<feature type="transmembrane region" description="Helical" evidence="1">
    <location>
        <begin position="162"/>
        <end position="182"/>
    </location>
</feature>
<evidence type="ECO:0000255" key="1">
    <source>
        <dbReference type="HAMAP-Rule" id="MF_00189"/>
    </source>
</evidence>
<gene>
    <name evidence="1" type="primary">yciB</name>
    <name type="ordered locus">Pput_1411</name>
</gene>
<protein>
    <recommendedName>
        <fullName evidence="1">Inner membrane-spanning protein YciB</fullName>
    </recommendedName>
</protein>
<name>YCIB_PSEP1</name>
<reference key="1">
    <citation type="submission" date="2007-05" db="EMBL/GenBank/DDBJ databases">
        <title>Complete sequence of Pseudomonas putida F1.</title>
        <authorList>
            <consortium name="US DOE Joint Genome Institute"/>
            <person name="Copeland A."/>
            <person name="Lucas S."/>
            <person name="Lapidus A."/>
            <person name="Barry K."/>
            <person name="Detter J.C."/>
            <person name="Glavina del Rio T."/>
            <person name="Hammon N."/>
            <person name="Israni S."/>
            <person name="Dalin E."/>
            <person name="Tice H."/>
            <person name="Pitluck S."/>
            <person name="Chain P."/>
            <person name="Malfatti S."/>
            <person name="Shin M."/>
            <person name="Vergez L."/>
            <person name="Schmutz J."/>
            <person name="Larimer F."/>
            <person name="Land M."/>
            <person name="Hauser L."/>
            <person name="Kyrpides N."/>
            <person name="Lykidis A."/>
            <person name="Parales R."/>
            <person name="Richardson P."/>
        </authorList>
    </citation>
    <scope>NUCLEOTIDE SEQUENCE [LARGE SCALE GENOMIC DNA]</scope>
    <source>
        <strain>ATCC 700007 / DSM 6899 / JCM 31910 / BCRC 17059 / LMG 24140 / F1</strain>
    </source>
</reference>
<sequence>MKQFIDFIPLLLFFIVYKLDPRPMEVAGHHFEFGGIYSATAMLIISSLVVYGALFLRQRKLEKGQWLTLIACLVFGGLTLTFHSETFLKWKAPVVNWLFALGFAGSHFIGDRVLIKRIMGHALTLPDAIWTRLNLAWIAFFLFCGAANLFVAFTFQDFWVDFKVFGSLGMTVIFLVAQGVYLSRHLHDDPSTSKPKD</sequence>
<dbReference type="EMBL" id="CP000712">
    <property type="protein sequence ID" value="ABQ77569.1"/>
    <property type="molecule type" value="Genomic_DNA"/>
</dbReference>
<dbReference type="SMR" id="A5W0A9"/>
<dbReference type="KEGG" id="ppf:Pput_1411"/>
<dbReference type="eggNOG" id="COG2917">
    <property type="taxonomic scope" value="Bacteria"/>
</dbReference>
<dbReference type="HOGENOM" id="CLU_089554_2_0_6"/>
<dbReference type="GO" id="GO:0005886">
    <property type="term" value="C:plasma membrane"/>
    <property type="evidence" value="ECO:0007669"/>
    <property type="project" value="UniProtKB-SubCell"/>
</dbReference>
<dbReference type="HAMAP" id="MF_00189">
    <property type="entry name" value="YciB"/>
    <property type="match status" value="1"/>
</dbReference>
<dbReference type="InterPro" id="IPR006008">
    <property type="entry name" value="YciB"/>
</dbReference>
<dbReference type="NCBIfam" id="TIGR00997">
    <property type="entry name" value="ispZ"/>
    <property type="match status" value="1"/>
</dbReference>
<dbReference type="NCBIfam" id="NF001325">
    <property type="entry name" value="PRK00259.1-3"/>
    <property type="match status" value="1"/>
</dbReference>
<dbReference type="NCBIfam" id="NF001327">
    <property type="entry name" value="PRK00259.1-5"/>
    <property type="match status" value="1"/>
</dbReference>
<dbReference type="PANTHER" id="PTHR36917:SF1">
    <property type="entry name" value="INNER MEMBRANE-SPANNING PROTEIN YCIB"/>
    <property type="match status" value="1"/>
</dbReference>
<dbReference type="PANTHER" id="PTHR36917">
    <property type="entry name" value="INTRACELLULAR SEPTATION PROTEIN A-RELATED"/>
    <property type="match status" value="1"/>
</dbReference>
<dbReference type="Pfam" id="PF04279">
    <property type="entry name" value="IspA"/>
    <property type="match status" value="1"/>
</dbReference>
<keyword id="KW-0997">Cell inner membrane</keyword>
<keyword id="KW-1003">Cell membrane</keyword>
<keyword id="KW-0472">Membrane</keyword>
<keyword id="KW-0812">Transmembrane</keyword>
<keyword id="KW-1133">Transmembrane helix</keyword>
<accession>A5W0A9</accession>
<comment type="function">
    <text evidence="1">Plays a role in cell envelope biogenesis, maintenance of cell envelope integrity and membrane homeostasis.</text>
</comment>
<comment type="subcellular location">
    <subcellularLocation>
        <location evidence="1">Cell inner membrane</location>
        <topology evidence="1">Multi-pass membrane protein</topology>
    </subcellularLocation>
</comment>
<comment type="similarity">
    <text evidence="1">Belongs to the YciB family.</text>
</comment>